<reference key="1">
    <citation type="submission" date="2006-12" db="EMBL/GenBank/DDBJ databases">
        <title>Complete sequence of Shewanella sp. W3-18-1.</title>
        <authorList>
            <consortium name="US DOE Joint Genome Institute"/>
            <person name="Copeland A."/>
            <person name="Lucas S."/>
            <person name="Lapidus A."/>
            <person name="Barry K."/>
            <person name="Detter J.C."/>
            <person name="Glavina del Rio T."/>
            <person name="Hammon N."/>
            <person name="Israni S."/>
            <person name="Dalin E."/>
            <person name="Tice H."/>
            <person name="Pitluck S."/>
            <person name="Chain P."/>
            <person name="Malfatti S."/>
            <person name="Shin M."/>
            <person name="Vergez L."/>
            <person name="Schmutz J."/>
            <person name="Larimer F."/>
            <person name="Land M."/>
            <person name="Hauser L."/>
            <person name="Kyrpides N."/>
            <person name="Lykidis A."/>
            <person name="Tiedje J."/>
            <person name="Richardson P."/>
        </authorList>
    </citation>
    <scope>NUCLEOTIDE SEQUENCE [LARGE SCALE GENOMIC DNA]</scope>
    <source>
        <strain>W3-18-1</strain>
    </source>
</reference>
<dbReference type="EC" id="6.1.1.22" evidence="1"/>
<dbReference type="EMBL" id="CP000503">
    <property type="protein sequence ID" value="ABM25047.1"/>
    <property type="molecule type" value="Genomic_DNA"/>
</dbReference>
<dbReference type="RefSeq" id="WP_011789513.1">
    <property type="nucleotide sequence ID" value="NC_008750.1"/>
</dbReference>
<dbReference type="SMR" id="A1RK52"/>
<dbReference type="GeneID" id="67443340"/>
<dbReference type="KEGG" id="shw:Sputw3181_2222"/>
<dbReference type="HOGENOM" id="CLU_004553_2_0_6"/>
<dbReference type="Proteomes" id="UP000002597">
    <property type="component" value="Chromosome"/>
</dbReference>
<dbReference type="GO" id="GO:0005737">
    <property type="term" value="C:cytoplasm"/>
    <property type="evidence" value="ECO:0007669"/>
    <property type="project" value="UniProtKB-SubCell"/>
</dbReference>
<dbReference type="GO" id="GO:0004816">
    <property type="term" value="F:asparagine-tRNA ligase activity"/>
    <property type="evidence" value="ECO:0007669"/>
    <property type="project" value="UniProtKB-UniRule"/>
</dbReference>
<dbReference type="GO" id="GO:0005524">
    <property type="term" value="F:ATP binding"/>
    <property type="evidence" value="ECO:0007669"/>
    <property type="project" value="UniProtKB-UniRule"/>
</dbReference>
<dbReference type="GO" id="GO:0003676">
    <property type="term" value="F:nucleic acid binding"/>
    <property type="evidence" value="ECO:0007669"/>
    <property type="project" value="InterPro"/>
</dbReference>
<dbReference type="GO" id="GO:0006421">
    <property type="term" value="P:asparaginyl-tRNA aminoacylation"/>
    <property type="evidence" value="ECO:0007669"/>
    <property type="project" value="UniProtKB-UniRule"/>
</dbReference>
<dbReference type="CDD" id="cd00776">
    <property type="entry name" value="AsxRS_core"/>
    <property type="match status" value="1"/>
</dbReference>
<dbReference type="CDD" id="cd04318">
    <property type="entry name" value="EcAsnRS_like_N"/>
    <property type="match status" value="1"/>
</dbReference>
<dbReference type="FunFam" id="3.30.930.10:FF:000016">
    <property type="entry name" value="Asparagine--tRNA ligase"/>
    <property type="match status" value="1"/>
</dbReference>
<dbReference type="Gene3D" id="3.30.930.10">
    <property type="entry name" value="Bira Bifunctional Protein, Domain 2"/>
    <property type="match status" value="1"/>
</dbReference>
<dbReference type="Gene3D" id="2.40.50.140">
    <property type="entry name" value="Nucleic acid-binding proteins"/>
    <property type="match status" value="1"/>
</dbReference>
<dbReference type="HAMAP" id="MF_00534">
    <property type="entry name" value="Asn_tRNA_synth"/>
    <property type="match status" value="1"/>
</dbReference>
<dbReference type="InterPro" id="IPR004364">
    <property type="entry name" value="Aa-tRNA-synt_II"/>
</dbReference>
<dbReference type="InterPro" id="IPR006195">
    <property type="entry name" value="aa-tRNA-synth_II"/>
</dbReference>
<dbReference type="InterPro" id="IPR045864">
    <property type="entry name" value="aa-tRNA-synth_II/BPL/LPL"/>
</dbReference>
<dbReference type="InterPro" id="IPR004522">
    <property type="entry name" value="Asn-tRNA-ligase"/>
</dbReference>
<dbReference type="InterPro" id="IPR002312">
    <property type="entry name" value="Asp/Asn-tRNA-synth_IIb"/>
</dbReference>
<dbReference type="InterPro" id="IPR012340">
    <property type="entry name" value="NA-bd_OB-fold"/>
</dbReference>
<dbReference type="InterPro" id="IPR004365">
    <property type="entry name" value="NA-bd_OB_tRNA"/>
</dbReference>
<dbReference type="NCBIfam" id="TIGR00457">
    <property type="entry name" value="asnS"/>
    <property type="match status" value="1"/>
</dbReference>
<dbReference type="NCBIfam" id="NF003037">
    <property type="entry name" value="PRK03932.1"/>
    <property type="match status" value="1"/>
</dbReference>
<dbReference type="PANTHER" id="PTHR22594:SF34">
    <property type="entry name" value="ASPARAGINE--TRNA LIGASE, MITOCHONDRIAL-RELATED"/>
    <property type="match status" value="1"/>
</dbReference>
<dbReference type="PANTHER" id="PTHR22594">
    <property type="entry name" value="ASPARTYL/LYSYL-TRNA SYNTHETASE"/>
    <property type="match status" value="1"/>
</dbReference>
<dbReference type="Pfam" id="PF00152">
    <property type="entry name" value="tRNA-synt_2"/>
    <property type="match status" value="1"/>
</dbReference>
<dbReference type="Pfam" id="PF01336">
    <property type="entry name" value="tRNA_anti-codon"/>
    <property type="match status" value="1"/>
</dbReference>
<dbReference type="PRINTS" id="PR01042">
    <property type="entry name" value="TRNASYNTHASP"/>
</dbReference>
<dbReference type="SUPFAM" id="SSF55681">
    <property type="entry name" value="Class II aaRS and biotin synthetases"/>
    <property type="match status" value="1"/>
</dbReference>
<dbReference type="SUPFAM" id="SSF50249">
    <property type="entry name" value="Nucleic acid-binding proteins"/>
    <property type="match status" value="1"/>
</dbReference>
<dbReference type="PROSITE" id="PS50862">
    <property type="entry name" value="AA_TRNA_LIGASE_II"/>
    <property type="match status" value="1"/>
</dbReference>
<name>SYN_SHESW</name>
<sequence length="466" mass="52181">MSIASVASVFKGEHAVGSKVTVRGWVRTRRDSKAGISFLAVYDGSCFNPIQGVVPNSLENYDNEVLKLTAGCSVVMTGDVVESPGAGQAFELQVTELEVTGWVDDPDTYPMAAKRHSIEHLRELAHLRPRTNIIGAVARVRNCLSQAIHRFYHEEGFIWVSTPLITASDCEGAGEMFRVSTLDMENLPRTSEGKVDYDKDFFGKEAFLTVSGQLNGETYACALSKIYTFGPTFRAENSNTSRHLAEFWMVEPEVAFATLSDIAGLAEAMLKYAFNAVLTERMDDLQFFAQHVDKTVIERLQSFVSSDFAQVDYTDAVDILQKCGKTFEFPVSWGIDLSSEHERYLAEEHFKAPVVVKNYPKDIKAFYMRLNEDGKTVAAMDVLAPGIGEIIGGSQREERLDVLDMRLAEMDLNKEDYWWYRDLRRYGTVPHAGFGLGFERLVSYVTGVSNIRDVIPFPRAPRTANF</sequence>
<protein>
    <recommendedName>
        <fullName evidence="1">Asparagine--tRNA ligase</fullName>
        <ecNumber evidence="1">6.1.1.22</ecNumber>
    </recommendedName>
    <alternativeName>
        <fullName evidence="1">Asparaginyl-tRNA synthetase</fullName>
        <shortName evidence="1">AsnRS</shortName>
    </alternativeName>
</protein>
<evidence type="ECO:0000255" key="1">
    <source>
        <dbReference type="HAMAP-Rule" id="MF_00534"/>
    </source>
</evidence>
<accession>A1RK52</accession>
<feature type="chain" id="PRO_1000051429" description="Asparagine--tRNA ligase">
    <location>
        <begin position="1"/>
        <end position="466"/>
    </location>
</feature>
<gene>
    <name evidence="1" type="primary">asnS</name>
    <name type="ordered locus">Sputw3181_2222</name>
</gene>
<comment type="catalytic activity">
    <reaction evidence="1">
        <text>tRNA(Asn) + L-asparagine + ATP = L-asparaginyl-tRNA(Asn) + AMP + diphosphate + H(+)</text>
        <dbReference type="Rhea" id="RHEA:11180"/>
        <dbReference type="Rhea" id="RHEA-COMP:9659"/>
        <dbReference type="Rhea" id="RHEA-COMP:9674"/>
        <dbReference type="ChEBI" id="CHEBI:15378"/>
        <dbReference type="ChEBI" id="CHEBI:30616"/>
        <dbReference type="ChEBI" id="CHEBI:33019"/>
        <dbReference type="ChEBI" id="CHEBI:58048"/>
        <dbReference type="ChEBI" id="CHEBI:78442"/>
        <dbReference type="ChEBI" id="CHEBI:78515"/>
        <dbReference type="ChEBI" id="CHEBI:456215"/>
        <dbReference type="EC" id="6.1.1.22"/>
    </reaction>
</comment>
<comment type="subunit">
    <text evidence="1">Homodimer.</text>
</comment>
<comment type="subcellular location">
    <subcellularLocation>
        <location evidence="1">Cytoplasm</location>
    </subcellularLocation>
</comment>
<comment type="similarity">
    <text evidence="1">Belongs to the class-II aminoacyl-tRNA synthetase family.</text>
</comment>
<proteinExistence type="inferred from homology"/>
<organism>
    <name type="scientific">Shewanella sp. (strain W3-18-1)</name>
    <dbReference type="NCBI Taxonomy" id="351745"/>
    <lineage>
        <taxon>Bacteria</taxon>
        <taxon>Pseudomonadati</taxon>
        <taxon>Pseudomonadota</taxon>
        <taxon>Gammaproteobacteria</taxon>
        <taxon>Alteromonadales</taxon>
        <taxon>Shewanellaceae</taxon>
        <taxon>Shewanella</taxon>
    </lineage>
</organism>
<keyword id="KW-0030">Aminoacyl-tRNA synthetase</keyword>
<keyword id="KW-0067">ATP-binding</keyword>
<keyword id="KW-0963">Cytoplasm</keyword>
<keyword id="KW-0436">Ligase</keyword>
<keyword id="KW-0547">Nucleotide-binding</keyword>
<keyword id="KW-0648">Protein biosynthesis</keyword>